<reference key="1">
    <citation type="journal article" date="2003" name="Nature">
        <title>The genome sequence of Bacillus anthracis Ames and comparison to closely related bacteria.</title>
        <authorList>
            <person name="Read T.D."/>
            <person name="Peterson S.N."/>
            <person name="Tourasse N.J."/>
            <person name="Baillie L.W."/>
            <person name="Paulsen I.T."/>
            <person name="Nelson K.E."/>
            <person name="Tettelin H."/>
            <person name="Fouts D.E."/>
            <person name="Eisen J.A."/>
            <person name="Gill S.R."/>
            <person name="Holtzapple E.K."/>
            <person name="Okstad O.A."/>
            <person name="Helgason E."/>
            <person name="Rilstone J."/>
            <person name="Wu M."/>
            <person name="Kolonay J.F."/>
            <person name="Beanan M.J."/>
            <person name="Dodson R.J."/>
            <person name="Brinkac L.M."/>
            <person name="Gwinn M.L."/>
            <person name="DeBoy R.T."/>
            <person name="Madpu R."/>
            <person name="Daugherty S.C."/>
            <person name="Durkin A.S."/>
            <person name="Haft D.H."/>
            <person name="Nelson W.C."/>
            <person name="Peterson J.D."/>
            <person name="Pop M."/>
            <person name="Khouri H.M."/>
            <person name="Radune D."/>
            <person name="Benton J.L."/>
            <person name="Mahamoud Y."/>
            <person name="Jiang L."/>
            <person name="Hance I.R."/>
            <person name="Weidman J.F."/>
            <person name="Berry K.J."/>
            <person name="Plaut R.D."/>
            <person name="Wolf A.M."/>
            <person name="Watkins K.L."/>
            <person name="Nierman W.C."/>
            <person name="Hazen A."/>
            <person name="Cline R.T."/>
            <person name="Redmond C."/>
            <person name="Thwaite J.E."/>
            <person name="White O."/>
            <person name="Salzberg S.L."/>
            <person name="Thomason B."/>
            <person name="Friedlander A.M."/>
            <person name="Koehler T.M."/>
            <person name="Hanna P.C."/>
            <person name="Kolstoe A.-B."/>
            <person name="Fraser C.M."/>
        </authorList>
    </citation>
    <scope>NUCLEOTIDE SEQUENCE [LARGE SCALE GENOMIC DNA]</scope>
    <source>
        <strain>Ames / isolate Porton</strain>
    </source>
</reference>
<reference key="2">
    <citation type="journal article" date="2009" name="J. Bacteriol.">
        <title>The complete genome sequence of Bacillus anthracis Ames 'Ancestor'.</title>
        <authorList>
            <person name="Ravel J."/>
            <person name="Jiang L."/>
            <person name="Stanley S.T."/>
            <person name="Wilson M.R."/>
            <person name="Decker R.S."/>
            <person name="Read T.D."/>
            <person name="Worsham P."/>
            <person name="Keim P.S."/>
            <person name="Salzberg S.L."/>
            <person name="Fraser-Liggett C.M."/>
            <person name="Rasko D.A."/>
        </authorList>
    </citation>
    <scope>NUCLEOTIDE SEQUENCE [LARGE SCALE GENOMIC DNA]</scope>
    <source>
        <strain>Ames ancestor</strain>
    </source>
</reference>
<reference key="3">
    <citation type="submission" date="2004-01" db="EMBL/GenBank/DDBJ databases">
        <title>Complete genome sequence of Bacillus anthracis Sterne.</title>
        <authorList>
            <person name="Brettin T.S."/>
            <person name="Bruce D."/>
            <person name="Challacombe J.F."/>
            <person name="Gilna P."/>
            <person name="Han C."/>
            <person name="Hill K."/>
            <person name="Hitchcock P."/>
            <person name="Jackson P."/>
            <person name="Keim P."/>
            <person name="Longmire J."/>
            <person name="Lucas S."/>
            <person name="Okinaka R."/>
            <person name="Richardson P."/>
            <person name="Rubin E."/>
            <person name="Tice H."/>
        </authorList>
    </citation>
    <scope>NUCLEOTIDE SEQUENCE [LARGE SCALE GENOMIC DNA]</scope>
    <source>
        <strain>Sterne</strain>
    </source>
</reference>
<organism>
    <name type="scientific">Bacillus anthracis</name>
    <dbReference type="NCBI Taxonomy" id="1392"/>
    <lineage>
        <taxon>Bacteria</taxon>
        <taxon>Bacillati</taxon>
        <taxon>Bacillota</taxon>
        <taxon>Bacilli</taxon>
        <taxon>Bacillales</taxon>
        <taxon>Bacillaceae</taxon>
        <taxon>Bacillus</taxon>
        <taxon>Bacillus cereus group</taxon>
    </lineage>
</organism>
<dbReference type="EMBL" id="AE016879">
    <property type="protein sequence ID" value="AAP24163.1"/>
    <property type="molecule type" value="Genomic_DNA"/>
</dbReference>
<dbReference type="EMBL" id="AE017334">
    <property type="protein sequence ID" value="AAT29189.1"/>
    <property type="molecule type" value="Genomic_DNA"/>
</dbReference>
<dbReference type="EMBL" id="AE017225">
    <property type="protein sequence ID" value="AAT52446.1"/>
    <property type="molecule type" value="Genomic_DNA"/>
</dbReference>
<dbReference type="RefSeq" id="NP_842677.1">
    <property type="nucleotide sequence ID" value="NC_003997.3"/>
</dbReference>
<dbReference type="RefSeq" id="WP_001040594.1">
    <property type="nucleotide sequence ID" value="NZ_WXXJ01000051.1"/>
</dbReference>
<dbReference type="RefSeq" id="YP_026395.1">
    <property type="nucleotide sequence ID" value="NC_005945.1"/>
</dbReference>
<dbReference type="SMR" id="Q81VT1"/>
<dbReference type="STRING" id="261594.GBAA_0109"/>
<dbReference type="DNASU" id="1086341"/>
<dbReference type="GeneID" id="45020154"/>
<dbReference type="KEGG" id="ban:BA_0109"/>
<dbReference type="KEGG" id="banh:HYU01_00600"/>
<dbReference type="KEGG" id="bar:GBAA_0109"/>
<dbReference type="KEGG" id="bat:BAS0109"/>
<dbReference type="PATRIC" id="fig|198094.11.peg.106"/>
<dbReference type="eggNOG" id="COG0051">
    <property type="taxonomic scope" value="Bacteria"/>
</dbReference>
<dbReference type="HOGENOM" id="CLU_122625_1_3_9"/>
<dbReference type="OMA" id="VDIEIKM"/>
<dbReference type="OrthoDB" id="9804464at2"/>
<dbReference type="Proteomes" id="UP000000427">
    <property type="component" value="Chromosome"/>
</dbReference>
<dbReference type="Proteomes" id="UP000000594">
    <property type="component" value="Chromosome"/>
</dbReference>
<dbReference type="GO" id="GO:1990904">
    <property type="term" value="C:ribonucleoprotein complex"/>
    <property type="evidence" value="ECO:0007669"/>
    <property type="project" value="UniProtKB-KW"/>
</dbReference>
<dbReference type="GO" id="GO:0005840">
    <property type="term" value="C:ribosome"/>
    <property type="evidence" value="ECO:0007669"/>
    <property type="project" value="UniProtKB-KW"/>
</dbReference>
<dbReference type="GO" id="GO:0003735">
    <property type="term" value="F:structural constituent of ribosome"/>
    <property type="evidence" value="ECO:0007669"/>
    <property type="project" value="InterPro"/>
</dbReference>
<dbReference type="GO" id="GO:0000049">
    <property type="term" value="F:tRNA binding"/>
    <property type="evidence" value="ECO:0007669"/>
    <property type="project" value="UniProtKB-UniRule"/>
</dbReference>
<dbReference type="GO" id="GO:0006412">
    <property type="term" value="P:translation"/>
    <property type="evidence" value="ECO:0007669"/>
    <property type="project" value="UniProtKB-UniRule"/>
</dbReference>
<dbReference type="FunFam" id="3.30.70.600:FF:000001">
    <property type="entry name" value="30S ribosomal protein S10"/>
    <property type="match status" value="1"/>
</dbReference>
<dbReference type="Gene3D" id="3.30.70.600">
    <property type="entry name" value="Ribosomal protein S10 domain"/>
    <property type="match status" value="1"/>
</dbReference>
<dbReference type="HAMAP" id="MF_00508">
    <property type="entry name" value="Ribosomal_uS10"/>
    <property type="match status" value="1"/>
</dbReference>
<dbReference type="InterPro" id="IPR001848">
    <property type="entry name" value="Ribosomal_uS10"/>
</dbReference>
<dbReference type="InterPro" id="IPR018268">
    <property type="entry name" value="Ribosomal_uS10_CS"/>
</dbReference>
<dbReference type="InterPro" id="IPR027486">
    <property type="entry name" value="Ribosomal_uS10_dom"/>
</dbReference>
<dbReference type="InterPro" id="IPR036838">
    <property type="entry name" value="Ribosomal_uS10_dom_sf"/>
</dbReference>
<dbReference type="NCBIfam" id="NF001861">
    <property type="entry name" value="PRK00596.1"/>
    <property type="match status" value="1"/>
</dbReference>
<dbReference type="NCBIfam" id="TIGR01049">
    <property type="entry name" value="rpsJ_bact"/>
    <property type="match status" value="1"/>
</dbReference>
<dbReference type="PANTHER" id="PTHR11700">
    <property type="entry name" value="30S RIBOSOMAL PROTEIN S10 FAMILY MEMBER"/>
    <property type="match status" value="1"/>
</dbReference>
<dbReference type="Pfam" id="PF00338">
    <property type="entry name" value="Ribosomal_S10"/>
    <property type="match status" value="1"/>
</dbReference>
<dbReference type="PRINTS" id="PR00971">
    <property type="entry name" value="RIBOSOMALS10"/>
</dbReference>
<dbReference type="SMART" id="SM01403">
    <property type="entry name" value="Ribosomal_S10"/>
    <property type="match status" value="1"/>
</dbReference>
<dbReference type="SUPFAM" id="SSF54999">
    <property type="entry name" value="Ribosomal protein S10"/>
    <property type="match status" value="1"/>
</dbReference>
<dbReference type="PROSITE" id="PS00361">
    <property type="entry name" value="RIBOSOMAL_S10"/>
    <property type="match status" value="1"/>
</dbReference>
<accession>Q81VT1</accession>
<accession>Q6I4T5</accession>
<accession>Q6KYI1</accession>
<name>RS10_BACAN</name>
<sequence>MAKEKIRIRLKAYDHRILDQSADKIVETAKRSGATVSGPIPLPTEKTVYTILRAVHKYKDSREQFEMRTHKRLIDIVSPTPQTVDSLMRLDLPSGVDIEIKL</sequence>
<gene>
    <name evidence="1" type="primary">rpsJ</name>
    <name type="ordered locus">BA_0109</name>
    <name type="ordered locus">GBAA_0109</name>
    <name type="ordered locus">BAS0109</name>
</gene>
<proteinExistence type="inferred from homology"/>
<protein>
    <recommendedName>
        <fullName evidence="1">Small ribosomal subunit protein uS10</fullName>
    </recommendedName>
    <alternativeName>
        <fullName evidence="2">30S ribosomal protein S10</fullName>
    </alternativeName>
</protein>
<comment type="function">
    <text evidence="1">Involved in the binding of tRNA to the ribosomes.</text>
</comment>
<comment type="subunit">
    <text evidence="1">Part of the 30S ribosomal subunit.</text>
</comment>
<comment type="similarity">
    <text evidence="1">Belongs to the universal ribosomal protein uS10 family.</text>
</comment>
<evidence type="ECO:0000255" key="1">
    <source>
        <dbReference type="HAMAP-Rule" id="MF_00508"/>
    </source>
</evidence>
<evidence type="ECO:0000305" key="2"/>
<feature type="chain" id="PRO_0000146489" description="Small ribosomal subunit protein uS10">
    <location>
        <begin position="1"/>
        <end position="102"/>
    </location>
</feature>
<keyword id="KW-1185">Reference proteome</keyword>
<keyword id="KW-0687">Ribonucleoprotein</keyword>
<keyword id="KW-0689">Ribosomal protein</keyword>